<name>TGFR2_CHICK</name>
<sequence>MPPRLRPLLLRVSLWVLVGSSSPALLHDRSKENGLQLPRLCKFCDVKATTCSNQDQCKSNCNITSICEKNNEVCAAVWRRNDENVTLETICHDPQKRLYGHMLDDSSSEQCVMKEKKDDGGLMFMCSCTGEECNDVLIFSAIDPHKPEEKDEISKVTIISLVPLLVISVAVIVIFYAYRTHKKRKLNKAWEKNVKPKKHKDCSDVCAIMLDDDHSDISSTCANNINHNTELLPIELDIVVGKGRFAEVYKAKLKQNTSEQYETVAVKIFPYEEYASWKTEKDIFSDVNLKHENILQFLTAEERKTDLGKQYWLITAFHARGNLQEYLTRHIISWEDLWKLGGSLARGIAHLHSDHTPCGRPKTPIVHRDLKSSNILVKNDLTCCLCDFGLSLRLDPSLSVDDLANSGQVGTARYMAPEVLESRMNLENMESFKQTDVYSMALVLWEMTSRCNGVGEVKEYEPPFGSKVREHPCVESMKDNVLRDRGRPEIPSSWLNHQGIQMVCETLIECWDHDPEARLTAQCVAERFSEFKHHDKLSGRSCSEEKIPEDGSVTTAK</sequence>
<protein>
    <recommendedName>
        <fullName>TGF-beta receptor type-2</fullName>
        <shortName>TGFR-2</shortName>
        <ecNumber>2.7.11.30</ecNumber>
    </recommendedName>
    <alternativeName>
        <fullName>TGF-beta type II receptor</fullName>
    </alternativeName>
    <alternativeName>
        <fullName>Transforming growth factor-beta receptor type II</fullName>
        <shortName>TGF-beta receptor type II</shortName>
        <shortName>TbetaR-II</shortName>
    </alternativeName>
</protein>
<accession>Q90999</accession>
<evidence type="ECO:0000250" key="1"/>
<evidence type="ECO:0000250" key="2">
    <source>
        <dbReference type="UniProtKB" id="P37173"/>
    </source>
</evidence>
<evidence type="ECO:0000255" key="3"/>
<evidence type="ECO:0000255" key="4">
    <source>
        <dbReference type="PROSITE-ProRule" id="PRU00159"/>
    </source>
</evidence>
<evidence type="ECO:0000255" key="5">
    <source>
        <dbReference type="PROSITE-ProRule" id="PRU10027"/>
    </source>
</evidence>
<evidence type="ECO:0000269" key="6">
    <source>
    </source>
</evidence>
<evidence type="ECO:0000269" key="7">
    <source>
    </source>
</evidence>
<evidence type="ECO:0000305" key="8"/>
<evidence type="ECO:0007829" key="9">
    <source>
        <dbReference type="PDB" id="1KS6"/>
    </source>
</evidence>
<keyword id="KW-0002">3D-structure</keyword>
<keyword id="KW-0053">Apoptosis</keyword>
<keyword id="KW-0067">ATP-binding</keyword>
<keyword id="KW-1003">Cell membrane</keyword>
<keyword id="KW-0221">Differentiation</keyword>
<keyword id="KW-1015">Disulfide bond</keyword>
<keyword id="KW-0325">Glycoprotein</keyword>
<keyword id="KW-0341">Growth regulation</keyword>
<keyword id="KW-0418">Kinase</keyword>
<keyword id="KW-0460">Magnesium</keyword>
<keyword id="KW-0464">Manganese</keyword>
<keyword id="KW-0472">Membrane</keyword>
<keyword id="KW-0479">Metal-binding</keyword>
<keyword id="KW-0547">Nucleotide-binding</keyword>
<keyword id="KW-0597">Phosphoprotein</keyword>
<keyword id="KW-0675">Receptor</keyword>
<keyword id="KW-1185">Reference proteome</keyword>
<keyword id="KW-0723">Serine/threonine-protein kinase</keyword>
<keyword id="KW-0732">Signal</keyword>
<keyword id="KW-0808">Transferase</keyword>
<keyword id="KW-0812">Transmembrane</keyword>
<keyword id="KW-1133">Transmembrane helix</keyword>
<organism>
    <name type="scientific">Gallus gallus</name>
    <name type="common">Chicken</name>
    <dbReference type="NCBI Taxonomy" id="9031"/>
    <lineage>
        <taxon>Eukaryota</taxon>
        <taxon>Metazoa</taxon>
        <taxon>Chordata</taxon>
        <taxon>Craniata</taxon>
        <taxon>Vertebrata</taxon>
        <taxon>Euteleostomi</taxon>
        <taxon>Archelosauria</taxon>
        <taxon>Archosauria</taxon>
        <taxon>Dinosauria</taxon>
        <taxon>Saurischia</taxon>
        <taxon>Theropoda</taxon>
        <taxon>Coelurosauria</taxon>
        <taxon>Aves</taxon>
        <taxon>Neognathae</taxon>
        <taxon>Galloanserae</taxon>
        <taxon>Galliformes</taxon>
        <taxon>Phasianidae</taxon>
        <taxon>Phasianinae</taxon>
        <taxon>Gallus</taxon>
    </lineage>
</organism>
<feature type="signal peptide" evidence="3">
    <location>
        <begin position="1"/>
        <end position="23"/>
    </location>
</feature>
<feature type="chain" id="PRO_5000142219" description="TGF-beta receptor type-2">
    <location>
        <begin position="24"/>
        <end position="557"/>
    </location>
</feature>
<feature type="topological domain" description="Extracellular" evidence="3">
    <location>
        <begin position="24"/>
        <end position="155"/>
    </location>
</feature>
<feature type="transmembrane region" description="Helical" evidence="3">
    <location>
        <begin position="156"/>
        <end position="176"/>
    </location>
</feature>
<feature type="topological domain" description="Cytoplasmic" evidence="3">
    <location>
        <begin position="177"/>
        <end position="557"/>
    </location>
</feature>
<feature type="domain" description="Protein kinase" evidence="4">
    <location>
        <begin position="234"/>
        <end position="537"/>
    </location>
</feature>
<feature type="active site" description="Proton acceptor" evidence="4 5">
    <location>
        <position position="369"/>
    </location>
</feature>
<feature type="binding site" evidence="4">
    <location>
        <begin position="240"/>
        <end position="248"/>
    </location>
    <ligand>
        <name>ATP</name>
        <dbReference type="ChEBI" id="CHEBI:30616"/>
    </ligand>
</feature>
<feature type="binding site" evidence="4">
    <location>
        <position position="267"/>
    </location>
    <ligand>
        <name>ATP</name>
        <dbReference type="ChEBI" id="CHEBI:30616"/>
    </ligand>
</feature>
<feature type="glycosylation site" description="N-linked (GlcNAc...) asparagine" evidence="3">
    <location>
        <position position="62"/>
    </location>
</feature>
<feature type="glycosylation site" description="N-linked (GlcNAc...) asparagine" evidence="3">
    <location>
        <position position="84"/>
    </location>
</feature>
<feature type="disulfide bond" evidence="6">
    <location>
        <begin position="41"/>
        <end position="74"/>
    </location>
</feature>
<feature type="disulfide bond" evidence="6">
    <location>
        <begin position="44"/>
        <end position="61"/>
    </location>
</feature>
<feature type="disulfide bond" evidence="6">
    <location>
        <begin position="51"/>
        <end position="57"/>
    </location>
</feature>
<feature type="disulfide bond" evidence="6">
    <location>
        <begin position="67"/>
        <end position="91"/>
    </location>
</feature>
<feature type="disulfide bond" evidence="6">
    <location>
        <begin position="111"/>
        <end position="126"/>
    </location>
</feature>
<feature type="disulfide bond" evidence="6">
    <location>
        <begin position="128"/>
        <end position="133"/>
    </location>
</feature>
<feature type="strand" evidence="9">
    <location>
        <begin position="44"/>
        <end position="48"/>
    </location>
</feature>
<feature type="strand" evidence="9">
    <location>
        <begin position="69"/>
        <end position="71"/>
    </location>
</feature>
<feature type="strand" evidence="9">
    <location>
        <begin position="74"/>
        <end position="81"/>
    </location>
</feature>
<feature type="strand" evidence="9">
    <location>
        <begin position="84"/>
        <end position="90"/>
    </location>
</feature>
<feature type="strand" evidence="9">
    <location>
        <begin position="106"/>
        <end position="110"/>
    </location>
</feature>
<feature type="strand" evidence="9">
    <location>
        <begin position="114"/>
        <end position="116"/>
    </location>
</feature>
<feature type="strand" evidence="9">
    <location>
        <begin position="119"/>
        <end position="132"/>
    </location>
</feature>
<feature type="turn" evidence="9">
    <location>
        <begin position="133"/>
        <end position="135"/>
    </location>
</feature>
<comment type="function">
    <text evidence="2 7">Transmembrane serine/threonine kinase forming with the TGF-beta type I serine/threonine kinase receptor, TGFBR1, the non-promiscuous receptor for the TGF-beta cytokines TGFB1, TGFB2 and TGFB3. Transduces the TGFB1, TGFB2 and TGFB3 signal from the cell surface to the cytoplasm and is thus regulating a plethora of physiological and pathological processes including cell cycle arrest in epithelial and hematopoietic cells, control of mesenchymal cell proliferation and differentiation, wound healing, extracellular matrix production, immunosuppression and carcinogenesis. The formation of the receptor complex composed of 2 TGFBR1 and 2 TGFBR2 molecules symmetrically bound to the cytokine dimer results in the phosphorylation and the activation of TGFRB1 by the constitutively active TGFBR2. Activated TGFBR1 phosphorylates SMAD2 which dissociates from the receptor and interacts with SMAD4. The SMAD2-SMAD4 complex is subsequently translocated to the nucleus where it modulates the transcription of the TGF-beta-regulated genes. This constitutes the canonical SMAD-dependent TGF-beta signaling cascade. Also involved in non-canonical, SMAD-independent TGF-beta signaling pathways (By similarity).</text>
</comment>
<comment type="catalytic activity">
    <reaction>
        <text>L-threonyl-[receptor-protein] + ATP = O-phospho-L-threonyl-[receptor-protein] + ADP + H(+)</text>
        <dbReference type="Rhea" id="RHEA:44880"/>
        <dbReference type="Rhea" id="RHEA-COMP:11024"/>
        <dbReference type="Rhea" id="RHEA-COMP:11025"/>
        <dbReference type="ChEBI" id="CHEBI:15378"/>
        <dbReference type="ChEBI" id="CHEBI:30013"/>
        <dbReference type="ChEBI" id="CHEBI:30616"/>
        <dbReference type="ChEBI" id="CHEBI:61977"/>
        <dbReference type="ChEBI" id="CHEBI:456216"/>
        <dbReference type="EC" id="2.7.11.30"/>
    </reaction>
</comment>
<comment type="catalytic activity">
    <reaction>
        <text>L-seryl-[receptor-protein] + ATP = O-phospho-L-seryl-[receptor-protein] + ADP + H(+)</text>
        <dbReference type="Rhea" id="RHEA:18673"/>
        <dbReference type="Rhea" id="RHEA-COMP:11022"/>
        <dbReference type="Rhea" id="RHEA-COMP:11023"/>
        <dbReference type="ChEBI" id="CHEBI:15378"/>
        <dbReference type="ChEBI" id="CHEBI:29999"/>
        <dbReference type="ChEBI" id="CHEBI:30616"/>
        <dbReference type="ChEBI" id="CHEBI:83421"/>
        <dbReference type="ChEBI" id="CHEBI:456216"/>
        <dbReference type="EC" id="2.7.11.30"/>
    </reaction>
</comment>
<comment type="cofactor">
    <cofactor evidence="1">
        <name>Mg(2+)</name>
        <dbReference type="ChEBI" id="CHEBI:18420"/>
    </cofactor>
    <cofactor evidence="1">
        <name>Mn(2+)</name>
        <dbReference type="ChEBI" id="CHEBI:29035"/>
    </cofactor>
</comment>
<comment type="subunit">
    <text evidence="2">Heterohexamer; TGFB1, TGFB2 and TGFB3 homodimeric ligands assemble a functional receptor composed of two TGFBR1 and TGFBR2 heterodimers to form a ligand-receptor heterohexamer.</text>
</comment>
<comment type="subcellular location">
    <subcellularLocation>
        <location evidence="2">Cell membrane</location>
        <topology evidence="2">Single-pass type I membrane protein</topology>
    </subcellularLocation>
    <subcellularLocation>
        <location evidence="2">Membrane raft</location>
    </subcellularLocation>
</comment>
<comment type="tissue specificity">
    <text evidence="7">Detected at low levels in embryonic heart, brain and lung. Detected at high levels in hatchling heart and lung.</text>
</comment>
<comment type="PTM">
    <text evidence="1">Phosphorylated on a Ser/Thr residue in the cytoplasmic domain.</text>
</comment>
<comment type="similarity">
    <text evidence="8">Belongs to the protein kinase superfamily. TKL Ser/Thr protein kinase family. TGFB receptor subfamily.</text>
</comment>
<proteinExistence type="evidence at protein level"/>
<reference key="1">
    <citation type="journal article" date="1994" name="Dev. Dyn.">
        <title>Cloning and developmental expression of the chick type II and type III TGF beta receptors.</title>
        <authorList>
            <person name="Barnett J.V."/>
            <person name="Moustakas A."/>
            <person name="Lin W."/>
            <person name="Wang X.-F."/>
            <person name="Lin H.Y."/>
            <person name="Galper J.B."/>
            <person name="Maas R.L."/>
        </authorList>
    </citation>
    <scope>NUCLEOTIDE SEQUENCE [MRNA]</scope>
    <scope>FUNCTION</scope>
    <scope>INTERACTION WITH TGF-BETA</scope>
    <scope>TISSUE SPECIFICITY</scope>
    <source>
        <tissue>Embryonic brain</tissue>
    </source>
</reference>
<reference key="2">
    <citation type="journal article" date="2003" name="J. Mol. Biol.">
        <title>Solution structure of the chick TGFbeta type II receptor ligand-binding domain.</title>
        <authorList>
            <person name="Marlow M.S."/>
            <person name="Brown C.B."/>
            <person name="Barnett J.V."/>
            <person name="Krezel A.M."/>
        </authorList>
    </citation>
    <scope>STRUCTURE BY NMR OF 36-142</scope>
    <scope>DISULFIDE BONDS</scope>
</reference>
<dbReference type="EC" id="2.7.11.30"/>
<dbReference type="EMBL" id="L18784">
    <property type="protein sequence ID" value="AAA49091.1"/>
    <property type="molecule type" value="mRNA"/>
</dbReference>
<dbReference type="PIR" id="I50429">
    <property type="entry name" value="I50429"/>
</dbReference>
<dbReference type="RefSeq" id="NP_990759.1">
    <property type="nucleotide sequence ID" value="NM_205428.2"/>
</dbReference>
<dbReference type="PDB" id="1KS6">
    <property type="method" value="NMR"/>
    <property type="chains" value="A=36-142"/>
</dbReference>
<dbReference type="PDBsum" id="1KS6"/>
<dbReference type="BMRB" id="Q90999"/>
<dbReference type="SMR" id="Q90999"/>
<dbReference type="FunCoup" id="Q90999">
    <property type="interactions" value="328"/>
</dbReference>
<dbReference type="IntAct" id="Q90999">
    <property type="interactions" value="1"/>
</dbReference>
<dbReference type="STRING" id="9031.ENSGALP00000018634"/>
<dbReference type="GlyCosmos" id="Q90999">
    <property type="glycosylation" value="2 sites, No reported glycans"/>
</dbReference>
<dbReference type="GlyGen" id="Q90999">
    <property type="glycosylation" value="2 sites"/>
</dbReference>
<dbReference type="PaxDb" id="9031-ENSGALP00000018634"/>
<dbReference type="Ensembl" id="ENSGALT00010005175.1">
    <property type="protein sequence ID" value="ENSGALP00010003047.1"/>
    <property type="gene ID" value="ENSGALG00010002281.1"/>
</dbReference>
<dbReference type="GeneID" id="396399"/>
<dbReference type="KEGG" id="gga:396399"/>
<dbReference type="CTD" id="7048"/>
<dbReference type="VEuPathDB" id="HostDB:geneid_396399"/>
<dbReference type="eggNOG" id="KOG3653">
    <property type="taxonomic scope" value="Eukaryota"/>
</dbReference>
<dbReference type="GeneTree" id="ENSGT00940000157527"/>
<dbReference type="HOGENOM" id="CLU_000288_8_3_1"/>
<dbReference type="InParanoid" id="Q90999"/>
<dbReference type="OrthoDB" id="547665at2759"/>
<dbReference type="PhylomeDB" id="Q90999"/>
<dbReference type="TreeFam" id="TF314724"/>
<dbReference type="Reactome" id="R-GGA-2173788">
    <property type="pathway name" value="Downregulation of TGF-beta receptor signaling"/>
</dbReference>
<dbReference type="Reactome" id="R-GGA-2173789">
    <property type="pathway name" value="TGF-beta receptor signaling activates SMADs"/>
</dbReference>
<dbReference type="Reactome" id="R-GGA-2173791">
    <property type="pathway name" value="TGF-beta receptor signaling in EMT (epithelial to mesenchymal transition)"/>
</dbReference>
<dbReference type="Reactome" id="R-GGA-9839389">
    <property type="pathway name" value="TGFBR3 regulates TGF-beta signaling"/>
</dbReference>
<dbReference type="EvolutionaryTrace" id="Q90999"/>
<dbReference type="PRO" id="PR:Q90999"/>
<dbReference type="Proteomes" id="UP000000539">
    <property type="component" value="Chromosome 2"/>
</dbReference>
<dbReference type="Bgee" id="ENSGALG00000011442">
    <property type="expression patterns" value="Expressed in lung and 13 other cell types or tissues"/>
</dbReference>
<dbReference type="GO" id="GO:0048179">
    <property type="term" value="C:activin receptor complex"/>
    <property type="evidence" value="ECO:0000318"/>
    <property type="project" value="GO_Central"/>
</dbReference>
<dbReference type="GO" id="GO:0005901">
    <property type="term" value="C:caveola"/>
    <property type="evidence" value="ECO:0000247"/>
    <property type="project" value="AgBase"/>
</dbReference>
<dbReference type="GO" id="GO:0009897">
    <property type="term" value="C:external side of plasma membrane"/>
    <property type="evidence" value="ECO:0000247"/>
    <property type="project" value="AgBase"/>
</dbReference>
<dbReference type="GO" id="GO:0031012">
    <property type="term" value="C:extracellular matrix"/>
    <property type="evidence" value="ECO:0000255"/>
    <property type="project" value="AgBase"/>
</dbReference>
<dbReference type="GO" id="GO:0016020">
    <property type="term" value="C:membrane"/>
    <property type="evidence" value="ECO:0000314"/>
    <property type="project" value="AgBase"/>
</dbReference>
<dbReference type="GO" id="GO:0045121">
    <property type="term" value="C:membrane raft"/>
    <property type="evidence" value="ECO:0000247"/>
    <property type="project" value="AgBase"/>
</dbReference>
<dbReference type="GO" id="GO:0005886">
    <property type="term" value="C:plasma membrane"/>
    <property type="evidence" value="ECO:0000247"/>
    <property type="project" value="AgBase"/>
</dbReference>
<dbReference type="GO" id="GO:0043235">
    <property type="term" value="C:receptor complex"/>
    <property type="evidence" value="ECO:0000247"/>
    <property type="project" value="AgBase"/>
</dbReference>
<dbReference type="GO" id="GO:0048185">
    <property type="term" value="F:activin binding"/>
    <property type="evidence" value="ECO:0000318"/>
    <property type="project" value="GO_Central"/>
</dbReference>
<dbReference type="GO" id="GO:0016361">
    <property type="term" value="F:activin receptor activity, type I"/>
    <property type="evidence" value="ECO:0000318"/>
    <property type="project" value="GO_Central"/>
</dbReference>
<dbReference type="GO" id="GO:0005524">
    <property type="term" value="F:ATP binding"/>
    <property type="evidence" value="ECO:0007669"/>
    <property type="project" value="UniProtKB-KW"/>
</dbReference>
<dbReference type="GO" id="GO:0005539">
    <property type="term" value="F:glycosaminoglycan binding"/>
    <property type="evidence" value="ECO:0000247"/>
    <property type="project" value="AgBase"/>
</dbReference>
<dbReference type="GO" id="GO:0046872">
    <property type="term" value="F:metal ion binding"/>
    <property type="evidence" value="ECO:0007669"/>
    <property type="project" value="UniProtKB-KW"/>
</dbReference>
<dbReference type="GO" id="GO:0050431">
    <property type="term" value="F:transforming growth factor beta binding"/>
    <property type="evidence" value="ECO:0000314"/>
    <property type="project" value="AgBase"/>
</dbReference>
<dbReference type="GO" id="GO:0005024">
    <property type="term" value="F:transforming growth factor beta receptor activity"/>
    <property type="evidence" value="ECO:0000247"/>
    <property type="project" value="AgBase"/>
</dbReference>
<dbReference type="GO" id="GO:0005026">
    <property type="term" value="F:transforming growth factor beta receptor activity, type II"/>
    <property type="evidence" value="ECO:0007669"/>
    <property type="project" value="InterPro"/>
</dbReference>
<dbReference type="GO" id="GO:0004675">
    <property type="term" value="F:transmembrane receptor protein serine/threonine kinase activity"/>
    <property type="evidence" value="ECO:0000247"/>
    <property type="project" value="AgBase"/>
</dbReference>
<dbReference type="GO" id="GO:0034713">
    <property type="term" value="F:type I transforming growth factor beta receptor binding"/>
    <property type="evidence" value="ECO:0000247"/>
    <property type="project" value="AgBase"/>
</dbReference>
<dbReference type="GO" id="GO:0034714">
    <property type="term" value="F:type III transforming growth factor beta receptor binding"/>
    <property type="evidence" value="ECO:0000250"/>
    <property type="project" value="AgBase"/>
</dbReference>
<dbReference type="GO" id="GO:0032924">
    <property type="term" value="P:activin receptor signaling pathway"/>
    <property type="evidence" value="ECO:0000318"/>
    <property type="project" value="GO_Central"/>
</dbReference>
<dbReference type="GO" id="GO:0006915">
    <property type="term" value="P:apoptotic process"/>
    <property type="evidence" value="ECO:0000247"/>
    <property type="project" value="AgBase"/>
</dbReference>
<dbReference type="GO" id="GO:0060317">
    <property type="term" value="P:cardiac epithelial to mesenchymal transition"/>
    <property type="evidence" value="ECO:0000270"/>
    <property type="project" value="AgBase"/>
</dbReference>
<dbReference type="GO" id="GO:0001775">
    <property type="term" value="P:cell activation"/>
    <property type="evidence" value="ECO:0000315"/>
    <property type="project" value="AgBase"/>
</dbReference>
<dbReference type="GO" id="GO:0016477">
    <property type="term" value="P:cell migration"/>
    <property type="evidence" value="ECO:0000304"/>
    <property type="project" value="AgBase"/>
</dbReference>
<dbReference type="GO" id="GO:0045216">
    <property type="term" value="P:cell-cell junction organization"/>
    <property type="evidence" value="ECO:0000255"/>
    <property type="project" value="AgBase"/>
</dbReference>
<dbReference type="GO" id="GO:0071363">
    <property type="term" value="P:cellular response to growth factor stimulus"/>
    <property type="evidence" value="ECO:0000318"/>
    <property type="project" value="GO_Central"/>
</dbReference>
<dbReference type="GO" id="GO:0070483">
    <property type="term" value="P:detection of hypoxia"/>
    <property type="evidence" value="ECO:0000255"/>
    <property type="project" value="AgBase"/>
</dbReference>
<dbReference type="GO" id="GO:0048568">
    <property type="term" value="P:embryonic organ development"/>
    <property type="evidence" value="ECO:0000270"/>
    <property type="project" value="AgBase"/>
</dbReference>
<dbReference type="GO" id="GO:0001654">
    <property type="term" value="P:eye development"/>
    <property type="evidence" value="ECO:0000270"/>
    <property type="project" value="AgBase"/>
</dbReference>
<dbReference type="GO" id="GO:0060325">
    <property type="term" value="P:face morphogenesis"/>
    <property type="evidence" value="ECO:0000255"/>
    <property type="project" value="AgBase"/>
</dbReference>
<dbReference type="GO" id="GO:0007507">
    <property type="term" value="P:heart development"/>
    <property type="evidence" value="ECO:0000314"/>
    <property type="project" value="AgBase"/>
</dbReference>
<dbReference type="GO" id="GO:0030324">
    <property type="term" value="P:lung development"/>
    <property type="evidence" value="ECO:0000270"/>
    <property type="project" value="AgBase"/>
</dbReference>
<dbReference type="GO" id="GO:0048762">
    <property type="term" value="P:mesenchymal cell differentiation"/>
    <property type="evidence" value="ECO:0000315"/>
    <property type="project" value="AgBase"/>
</dbReference>
<dbReference type="GO" id="GO:0010936">
    <property type="term" value="P:negative regulation of macrophage cytokine production"/>
    <property type="evidence" value="ECO:0000255"/>
    <property type="project" value="AgBase"/>
</dbReference>
<dbReference type="GO" id="GO:0007399">
    <property type="term" value="P:nervous system development"/>
    <property type="evidence" value="ECO:0000318"/>
    <property type="project" value="GO_Central"/>
</dbReference>
<dbReference type="GO" id="GO:0030335">
    <property type="term" value="P:positive regulation of cell migration"/>
    <property type="evidence" value="ECO:0000315"/>
    <property type="project" value="AgBase"/>
</dbReference>
<dbReference type="GO" id="GO:0010718">
    <property type="term" value="P:positive regulation of epithelial to mesenchymal transition"/>
    <property type="evidence" value="ECO:0000315"/>
    <property type="project" value="AgBase"/>
</dbReference>
<dbReference type="GO" id="GO:0010628">
    <property type="term" value="P:positive regulation of gene expression"/>
    <property type="evidence" value="ECO:0000304"/>
    <property type="project" value="AgBase"/>
</dbReference>
<dbReference type="GO" id="GO:0050714">
    <property type="term" value="P:positive regulation of protein secretion"/>
    <property type="evidence" value="ECO:0000255"/>
    <property type="project" value="AgBase"/>
</dbReference>
<dbReference type="GO" id="GO:2000379">
    <property type="term" value="P:positive regulation of reactive oxygen species metabolic process"/>
    <property type="evidence" value="ECO:0000247"/>
    <property type="project" value="AgBase"/>
</dbReference>
<dbReference type="GO" id="GO:0051496">
    <property type="term" value="P:positive regulation of stress fiber assembly"/>
    <property type="evidence" value="ECO:0000250"/>
    <property type="project" value="AgBase"/>
</dbReference>
<dbReference type="GO" id="GO:1905075">
    <property type="term" value="P:positive regulation of tight junction disassembly"/>
    <property type="evidence" value="ECO:0000250"/>
    <property type="project" value="AgBase"/>
</dbReference>
<dbReference type="GO" id="GO:0006468">
    <property type="term" value="P:protein phosphorylation"/>
    <property type="evidence" value="ECO:0000247"/>
    <property type="project" value="AgBase"/>
</dbReference>
<dbReference type="GO" id="GO:0070723">
    <property type="term" value="P:response to cholesterol"/>
    <property type="evidence" value="ECO:0000247"/>
    <property type="project" value="AgBase"/>
</dbReference>
<dbReference type="GO" id="GO:0001666">
    <property type="term" value="P:response to hypoxia"/>
    <property type="evidence" value="ECO:0000255"/>
    <property type="project" value="AgBase"/>
</dbReference>
<dbReference type="GO" id="GO:0032570">
    <property type="term" value="P:response to progesterone"/>
    <property type="evidence" value="ECO:0000255"/>
    <property type="project" value="AgBase"/>
</dbReference>
<dbReference type="GO" id="GO:0009410">
    <property type="term" value="P:response to xenobiotic stimulus"/>
    <property type="evidence" value="ECO:0000247"/>
    <property type="project" value="AgBase"/>
</dbReference>
<dbReference type="GO" id="GO:0007179">
    <property type="term" value="P:transforming growth factor beta receptor signaling pathway"/>
    <property type="evidence" value="ECO:0000247"/>
    <property type="project" value="AgBase"/>
</dbReference>
<dbReference type="CDD" id="cd14055">
    <property type="entry name" value="STKc_TGFbR2_like"/>
    <property type="match status" value="1"/>
</dbReference>
<dbReference type="CDD" id="cd23538">
    <property type="entry name" value="TFP_LU_ECD_TGFR2"/>
    <property type="match status" value="1"/>
</dbReference>
<dbReference type="FunFam" id="1.10.510.10:FF:000260">
    <property type="entry name" value="TGF-beta receptor type-2"/>
    <property type="match status" value="1"/>
</dbReference>
<dbReference type="FunFam" id="2.10.60.10:FF:000009">
    <property type="entry name" value="TGF-beta receptor type-2"/>
    <property type="match status" value="1"/>
</dbReference>
<dbReference type="FunFam" id="3.30.200.20:FF:000213">
    <property type="entry name" value="TGF-beta receptor type-2"/>
    <property type="match status" value="1"/>
</dbReference>
<dbReference type="Gene3D" id="2.10.60.10">
    <property type="entry name" value="CD59"/>
    <property type="match status" value="1"/>
</dbReference>
<dbReference type="Gene3D" id="3.30.200.20">
    <property type="entry name" value="Phosphorylase Kinase, domain 1"/>
    <property type="match status" value="1"/>
</dbReference>
<dbReference type="Gene3D" id="1.10.510.10">
    <property type="entry name" value="Transferase(Phosphotransferase) domain 1"/>
    <property type="match status" value="1"/>
</dbReference>
<dbReference type="InterPro" id="IPR011009">
    <property type="entry name" value="Kinase-like_dom_sf"/>
</dbReference>
<dbReference type="InterPro" id="IPR000719">
    <property type="entry name" value="Prot_kinase_dom"/>
</dbReference>
<dbReference type="InterPro" id="IPR017441">
    <property type="entry name" value="Protein_kinase_ATP_BS"/>
</dbReference>
<dbReference type="InterPro" id="IPR001245">
    <property type="entry name" value="Ser-Thr/Tyr_kinase_cat_dom"/>
</dbReference>
<dbReference type="InterPro" id="IPR008271">
    <property type="entry name" value="Ser/Thr_kinase_AS"/>
</dbReference>
<dbReference type="InterPro" id="IPR045860">
    <property type="entry name" value="Snake_toxin-like_sf"/>
</dbReference>
<dbReference type="InterPro" id="IPR000333">
    <property type="entry name" value="TGFB_receptor"/>
</dbReference>
<dbReference type="InterPro" id="IPR017194">
    <property type="entry name" value="Transform_growth_fac-b_typ-2"/>
</dbReference>
<dbReference type="InterPro" id="IPR015013">
    <property type="entry name" value="Transforming_GF_b_rcpt_2_ecto"/>
</dbReference>
<dbReference type="PANTHER" id="PTHR23255:SF55">
    <property type="entry name" value="TGF-BETA RECEPTOR TYPE-2"/>
    <property type="match status" value="1"/>
</dbReference>
<dbReference type="PANTHER" id="PTHR23255">
    <property type="entry name" value="TRANSFORMING GROWTH FACTOR-BETA RECEPTOR TYPE I AND II"/>
    <property type="match status" value="1"/>
</dbReference>
<dbReference type="Pfam" id="PF08917">
    <property type="entry name" value="ecTbetaR2"/>
    <property type="match status" value="1"/>
</dbReference>
<dbReference type="Pfam" id="PF07714">
    <property type="entry name" value="PK_Tyr_Ser-Thr"/>
    <property type="match status" value="1"/>
</dbReference>
<dbReference type="PIRSF" id="PIRSF037393">
    <property type="entry name" value="TGFRII"/>
    <property type="match status" value="1"/>
</dbReference>
<dbReference type="PRINTS" id="PR00653">
    <property type="entry name" value="ACTIVIN2R"/>
</dbReference>
<dbReference type="SMART" id="SM00220">
    <property type="entry name" value="S_TKc"/>
    <property type="match status" value="1"/>
</dbReference>
<dbReference type="SUPFAM" id="SSF56112">
    <property type="entry name" value="Protein kinase-like (PK-like)"/>
    <property type="match status" value="1"/>
</dbReference>
<dbReference type="SUPFAM" id="SSF57302">
    <property type="entry name" value="Snake toxin-like"/>
    <property type="match status" value="1"/>
</dbReference>
<dbReference type="PROSITE" id="PS00107">
    <property type="entry name" value="PROTEIN_KINASE_ATP"/>
    <property type="match status" value="1"/>
</dbReference>
<dbReference type="PROSITE" id="PS50011">
    <property type="entry name" value="PROTEIN_KINASE_DOM"/>
    <property type="match status" value="1"/>
</dbReference>
<dbReference type="PROSITE" id="PS00108">
    <property type="entry name" value="PROTEIN_KINASE_ST"/>
    <property type="match status" value="1"/>
</dbReference>
<gene>
    <name type="primary">TGFBR2</name>
</gene>